<sequence>MADDKKSVKKEKKVKKKEKKIVPRGKVYITASFNNTIVTITDMAGNTISWSTSGAMGFRGSKKSTPYAAQIAAGNAAEKAMDSAGLQEVDVMVSGPGIGRESAIRSLVARGLNIKMIKDVTPLPHNGCRPRKRRRV</sequence>
<dbReference type="EMBL" id="CP000348">
    <property type="protein sequence ID" value="ABJ78036.1"/>
    <property type="molecule type" value="Genomic_DNA"/>
</dbReference>
<dbReference type="EMBL" id="CP000348">
    <property type="protein sequence ID" value="ABJ78076.1"/>
    <property type="molecule type" value="Genomic_DNA"/>
</dbReference>
<dbReference type="RefSeq" id="WP_000752686.1">
    <property type="nucleotide sequence ID" value="NC_008508.1"/>
</dbReference>
<dbReference type="SMR" id="Q055B9"/>
<dbReference type="GeneID" id="61172975"/>
<dbReference type="KEGG" id="lbl:LBL_0438"/>
<dbReference type="KEGG" id="lbl:LBL_0478"/>
<dbReference type="HOGENOM" id="CLU_072439_5_0_12"/>
<dbReference type="GO" id="GO:1990904">
    <property type="term" value="C:ribonucleoprotein complex"/>
    <property type="evidence" value="ECO:0007669"/>
    <property type="project" value="UniProtKB-KW"/>
</dbReference>
<dbReference type="GO" id="GO:0005840">
    <property type="term" value="C:ribosome"/>
    <property type="evidence" value="ECO:0007669"/>
    <property type="project" value="UniProtKB-KW"/>
</dbReference>
<dbReference type="GO" id="GO:0019843">
    <property type="term" value="F:rRNA binding"/>
    <property type="evidence" value="ECO:0007669"/>
    <property type="project" value="UniProtKB-UniRule"/>
</dbReference>
<dbReference type="GO" id="GO:0003735">
    <property type="term" value="F:structural constituent of ribosome"/>
    <property type="evidence" value="ECO:0007669"/>
    <property type="project" value="InterPro"/>
</dbReference>
<dbReference type="GO" id="GO:0006412">
    <property type="term" value="P:translation"/>
    <property type="evidence" value="ECO:0007669"/>
    <property type="project" value="UniProtKB-UniRule"/>
</dbReference>
<dbReference type="FunFam" id="3.30.420.80:FF:000012">
    <property type="entry name" value="30S ribosomal protein S11"/>
    <property type="match status" value="1"/>
</dbReference>
<dbReference type="Gene3D" id="3.30.420.80">
    <property type="entry name" value="Ribosomal protein S11"/>
    <property type="match status" value="1"/>
</dbReference>
<dbReference type="HAMAP" id="MF_01310">
    <property type="entry name" value="Ribosomal_uS11"/>
    <property type="match status" value="1"/>
</dbReference>
<dbReference type="InterPro" id="IPR001971">
    <property type="entry name" value="Ribosomal_uS11"/>
</dbReference>
<dbReference type="InterPro" id="IPR019981">
    <property type="entry name" value="Ribosomal_uS11_bac-type"/>
</dbReference>
<dbReference type="InterPro" id="IPR018102">
    <property type="entry name" value="Ribosomal_uS11_CS"/>
</dbReference>
<dbReference type="InterPro" id="IPR036967">
    <property type="entry name" value="Ribosomal_uS11_sf"/>
</dbReference>
<dbReference type="NCBIfam" id="NF003698">
    <property type="entry name" value="PRK05309.1"/>
    <property type="match status" value="1"/>
</dbReference>
<dbReference type="NCBIfam" id="TIGR03632">
    <property type="entry name" value="uS11_bact"/>
    <property type="match status" value="1"/>
</dbReference>
<dbReference type="PANTHER" id="PTHR11759">
    <property type="entry name" value="40S RIBOSOMAL PROTEIN S14/30S RIBOSOMAL PROTEIN S11"/>
    <property type="match status" value="1"/>
</dbReference>
<dbReference type="Pfam" id="PF00411">
    <property type="entry name" value="Ribosomal_S11"/>
    <property type="match status" value="1"/>
</dbReference>
<dbReference type="PIRSF" id="PIRSF002131">
    <property type="entry name" value="Ribosomal_S11"/>
    <property type="match status" value="1"/>
</dbReference>
<dbReference type="SUPFAM" id="SSF53137">
    <property type="entry name" value="Translational machinery components"/>
    <property type="match status" value="1"/>
</dbReference>
<dbReference type="PROSITE" id="PS00054">
    <property type="entry name" value="RIBOSOMAL_S11"/>
    <property type="match status" value="1"/>
</dbReference>
<reference key="1">
    <citation type="journal article" date="2006" name="Proc. Natl. Acad. Sci. U.S.A.">
        <title>Genome reduction in Leptospira borgpetersenii reflects limited transmission potential.</title>
        <authorList>
            <person name="Bulach D.M."/>
            <person name="Zuerner R.L."/>
            <person name="Wilson P."/>
            <person name="Seemann T."/>
            <person name="McGrath A."/>
            <person name="Cullen P.A."/>
            <person name="Davis J."/>
            <person name="Johnson M."/>
            <person name="Kuczek E."/>
            <person name="Alt D.P."/>
            <person name="Peterson-Burch B."/>
            <person name="Coppel R.L."/>
            <person name="Rood J.I."/>
            <person name="Davies J.K."/>
            <person name="Adler B."/>
        </authorList>
    </citation>
    <scope>NUCLEOTIDE SEQUENCE [LARGE SCALE GENOMIC DNA]</scope>
    <source>
        <strain>L550</strain>
    </source>
</reference>
<gene>
    <name evidence="1" type="primary">rpsK1</name>
    <name type="synonym">rpsK-1</name>
    <name type="ordered locus">LBL_0438</name>
</gene>
<gene>
    <name evidence="1" type="primary">rpsK2</name>
    <name type="synonym">rpsK</name>
    <name type="ordered locus">LBL_0478</name>
</gene>
<organism>
    <name type="scientific">Leptospira borgpetersenii serovar Hardjo-bovis (strain L550)</name>
    <dbReference type="NCBI Taxonomy" id="355276"/>
    <lineage>
        <taxon>Bacteria</taxon>
        <taxon>Pseudomonadati</taxon>
        <taxon>Spirochaetota</taxon>
        <taxon>Spirochaetia</taxon>
        <taxon>Leptospirales</taxon>
        <taxon>Leptospiraceae</taxon>
        <taxon>Leptospira</taxon>
    </lineage>
</organism>
<comment type="function">
    <text evidence="1">Located on the platform of the 30S subunit, it bridges several disparate RNA helices of the 16S rRNA. Forms part of the Shine-Dalgarno cleft in the 70S ribosome.</text>
</comment>
<comment type="subunit">
    <text evidence="1">Part of the 30S ribosomal subunit. Interacts with proteins S7 and S18. Binds to IF-3.</text>
</comment>
<comment type="similarity">
    <text evidence="1">Belongs to the universal ribosomal protein uS11 family.</text>
</comment>
<accession>Q055B9</accession>
<protein>
    <recommendedName>
        <fullName evidence="1">Small ribosomal subunit protein uS11</fullName>
    </recommendedName>
    <alternativeName>
        <fullName evidence="2">30S ribosomal protein S11</fullName>
    </alternativeName>
</protein>
<keyword id="KW-0687">Ribonucleoprotein</keyword>
<keyword id="KW-0689">Ribosomal protein</keyword>
<keyword id="KW-0694">RNA-binding</keyword>
<keyword id="KW-0699">rRNA-binding</keyword>
<name>RS11_LEPBL</name>
<feature type="chain" id="PRO_0000294783" description="Small ribosomal subunit protein uS11">
    <location>
        <begin position="1"/>
        <end position="136"/>
    </location>
</feature>
<proteinExistence type="inferred from homology"/>
<evidence type="ECO:0000255" key="1">
    <source>
        <dbReference type="HAMAP-Rule" id="MF_01310"/>
    </source>
</evidence>
<evidence type="ECO:0000305" key="2"/>